<protein>
    <recommendedName>
        <fullName>Ribose-phosphate pyrophosphokinase 1</fullName>
        <ecNumber>2.7.6.1</ecNumber>
    </recommendedName>
    <alternativeName>
        <fullName>Phosphoribosyl pyrophosphate synthase 1</fullName>
    </alternativeName>
</protein>
<dbReference type="EC" id="2.7.6.1"/>
<dbReference type="EMBL" id="AJ006940">
    <property type="protein sequence ID" value="CAB43599.1"/>
    <property type="molecule type" value="mRNA"/>
</dbReference>
<dbReference type="SMR" id="Q9XG98"/>
<dbReference type="Proteomes" id="UP001155700">
    <property type="component" value="Unplaced"/>
</dbReference>
<dbReference type="GO" id="GO:0005737">
    <property type="term" value="C:cytoplasm"/>
    <property type="evidence" value="ECO:0000318"/>
    <property type="project" value="GO_Central"/>
</dbReference>
<dbReference type="GO" id="GO:0002189">
    <property type="term" value="C:ribose phosphate diphosphokinase complex"/>
    <property type="evidence" value="ECO:0000318"/>
    <property type="project" value="GO_Central"/>
</dbReference>
<dbReference type="GO" id="GO:0005524">
    <property type="term" value="F:ATP binding"/>
    <property type="evidence" value="ECO:0007669"/>
    <property type="project" value="UniProtKB-KW"/>
</dbReference>
<dbReference type="GO" id="GO:0016301">
    <property type="term" value="F:kinase activity"/>
    <property type="evidence" value="ECO:0007669"/>
    <property type="project" value="UniProtKB-KW"/>
</dbReference>
<dbReference type="GO" id="GO:0000287">
    <property type="term" value="F:magnesium ion binding"/>
    <property type="evidence" value="ECO:0007669"/>
    <property type="project" value="InterPro"/>
</dbReference>
<dbReference type="GO" id="GO:0004749">
    <property type="term" value="F:ribose phosphate diphosphokinase activity"/>
    <property type="evidence" value="ECO:0000318"/>
    <property type="project" value="GO_Central"/>
</dbReference>
<dbReference type="GO" id="GO:0006015">
    <property type="term" value="P:5-phosphoribose 1-diphosphate biosynthetic process"/>
    <property type="evidence" value="ECO:0000318"/>
    <property type="project" value="GO_Central"/>
</dbReference>
<dbReference type="GO" id="GO:0006164">
    <property type="term" value="P:purine nucleotide biosynthetic process"/>
    <property type="evidence" value="ECO:0000318"/>
    <property type="project" value="GO_Central"/>
</dbReference>
<dbReference type="GO" id="GO:0009156">
    <property type="term" value="P:ribonucleoside monophosphate biosynthetic process"/>
    <property type="evidence" value="ECO:0007669"/>
    <property type="project" value="InterPro"/>
</dbReference>
<dbReference type="CDD" id="cd06223">
    <property type="entry name" value="PRTases_typeI"/>
    <property type="match status" value="1"/>
</dbReference>
<dbReference type="FunFam" id="3.40.50.2020:FF:000002">
    <property type="entry name" value="Ribose-phosphate pyrophosphokinase"/>
    <property type="match status" value="1"/>
</dbReference>
<dbReference type="FunFam" id="3.40.50.2020:FF:000014">
    <property type="entry name" value="Ribose-phosphate pyrophosphokinase 1"/>
    <property type="match status" value="1"/>
</dbReference>
<dbReference type="Gene3D" id="3.40.50.2020">
    <property type="match status" value="2"/>
</dbReference>
<dbReference type="HAMAP" id="MF_00583_B">
    <property type="entry name" value="RibP_PPkinase_B"/>
    <property type="match status" value="1"/>
</dbReference>
<dbReference type="InterPro" id="IPR000842">
    <property type="entry name" value="PRib_PP_synth_CS"/>
</dbReference>
<dbReference type="InterPro" id="IPR029099">
    <property type="entry name" value="Pribosyltran_N"/>
</dbReference>
<dbReference type="InterPro" id="IPR000836">
    <property type="entry name" value="PRibTrfase_dom"/>
</dbReference>
<dbReference type="InterPro" id="IPR029057">
    <property type="entry name" value="PRTase-like"/>
</dbReference>
<dbReference type="InterPro" id="IPR005946">
    <property type="entry name" value="Rib-P_diPkinase"/>
</dbReference>
<dbReference type="InterPro" id="IPR037515">
    <property type="entry name" value="Rib-P_diPkinase_bac"/>
</dbReference>
<dbReference type="NCBIfam" id="NF002320">
    <property type="entry name" value="PRK01259.1"/>
    <property type="match status" value="1"/>
</dbReference>
<dbReference type="NCBIfam" id="NF002758">
    <property type="entry name" value="PRK02812.1"/>
    <property type="match status" value="1"/>
</dbReference>
<dbReference type="NCBIfam" id="TIGR01251">
    <property type="entry name" value="ribP_PPkin"/>
    <property type="match status" value="1"/>
</dbReference>
<dbReference type="PANTHER" id="PTHR10210">
    <property type="entry name" value="RIBOSE-PHOSPHATE DIPHOSPHOKINASE FAMILY MEMBER"/>
    <property type="match status" value="1"/>
</dbReference>
<dbReference type="PANTHER" id="PTHR10210:SF120">
    <property type="entry name" value="RIBOSE-PHOSPHATE PYROPHOSPHOKINASE 5, CHLOROPLASTIC"/>
    <property type="match status" value="1"/>
</dbReference>
<dbReference type="Pfam" id="PF14572">
    <property type="entry name" value="Pribosyl_synth"/>
    <property type="match status" value="1"/>
</dbReference>
<dbReference type="Pfam" id="PF13793">
    <property type="entry name" value="Pribosyltran_N"/>
    <property type="match status" value="1"/>
</dbReference>
<dbReference type="SMART" id="SM01400">
    <property type="entry name" value="Pribosyltran_N"/>
    <property type="match status" value="1"/>
</dbReference>
<dbReference type="SUPFAM" id="SSF53271">
    <property type="entry name" value="PRTase-like"/>
    <property type="match status" value="1"/>
</dbReference>
<dbReference type="PROSITE" id="PS00114">
    <property type="entry name" value="PRPP_SYNTHASE"/>
    <property type="match status" value="1"/>
</dbReference>
<reference key="1">
    <citation type="journal article" date="1999" name="Plant Physiol.">
        <title>Organellar and cytosolic localization of four phosphoribosyl diphosphate synthase isozymes in spinach.</title>
        <authorList>
            <person name="Krath B.N."/>
            <person name="Hove-Jensen B."/>
        </authorList>
    </citation>
    <scope>NUCLEOTIDE SEQUENCE [MRNA]</scope>
    <source>
        <tissue>Leaf</tissue>
    </source>
</reference>
<sequence>MDQQSFPSFMASTHFDSSINRNDTRLRIFSGTANPALAQEIACYMGLQLGKIKIKRFADGEIYVQLQESVRGCDVFLVQPTCPPANENLMELLIMIDACRRASAKNITAVIPYFGYARADRKTQGRESIAAKLVANLITEAGANRVLACDLHSGQSMGYFDIPVDHVYGQPVILDYLASKTICSDDLVVVSPDVGGVARARAFAKKLSDAPLAIVDKRRHGHNVAEVMNLIGDVKGKVAVMVDDMIDTAGTISKGAALLHQEGAREVYACSTHAVFSPPAIERLSSGLFQEVIITNTIPVLEKNYFPQLTVLSVANLLGETIWRVHDDCSVSSIFQ</sequence>
<gene>
    <name type="primary">PRS1</name>
</gene>
<accession>Q9XG98</accession>
<organism>
    <name type="scientific">Spinacia oleracea</name>
    <name type="common">Spinach</name>
    <dbReference type="NCBI Taxonomy" id="3562"/>
    <lineage>
        <taxon>Eukaryota</taxon>
        <taxon>Viridiplantae</taxon>
        <taxon>Streptophyta</taxon>
        <taxon>Embryophyta</taxon>
        <taxon>Tracheophyta</taxon>
        <taxon>Spermatophyta</taxon>
        <taxon>Magnoliopsida</taxon>
        <taxon>eudicotyledons</taxon>
        <taxon>Gunneridae</taxon>
        <taxon>Pentapetalae</taxon>
        <taxon>Caryophyllales</taxon>
        <taxon>Chenopodiaceae</taxon>
        <taxon>Chenopodioideae</taxon>
        <taxon>Anserineae</taxon>
        <taxon>Spinacia</taxon>
    </lineage>
</organism>
<name>KPRS1_SPIOL</name>
<feature type="chain" id="PRO_0000141101" description="Ribose-phosphate pyrophosphokinase 1">
    <location>
        <begin position="1"/>
        <end position="336"/>
    </location>
</feature>
<feature type="region of interest" description="Binding of phosphoribosylpyrophosphate" evidence="1">
    <location>
        <begin position="236"/>
        <end position="251"/>
    </location>
</feature>
<feature type="binding site" evidence="1">
    <location>
        <position position="150"/>
    </location>
    <ligand>
        <name>Mg(2+)</name>
        <dbReference type="ChEBI" id="CHEBI:18420"/>
    </ligand>
</feature>
<feature type="binding site" evidence="1">
    <location>
        <position position="152"/>
    </location>
    <ligand>
        <name>Mg(2+)</name>
        <dbReference type="ChEBI" id="CHEBI:18420"/>
    </ligand>
</feature>
<feature type="binding site" evidence="1">
    <location>
        <position position="161"/>
    </location>
    <ligand>
        <name>Mg(2+)</name>
        <dbReference type="ChEBI" id="CHEBI:18420"/>
    </ligand>
</feature>
<feature type="binding site" evidence="1">
    <location>
        <position position="165"/>
    </location>
    <ligand>
        <name>Mg(2+)</name>
        <dbReference type="ChEBI" id="CHEBI:18420"/>
    </ligand>
</feature>
<keyword id="KW-0067">ATP-binding</keyword>
<keyword id="KW-0418">Kinase</keyword>
<keyword id="KW-0460">Magnesium</keyword>
<keyword id="KW-0479">Metal-binding</keyword>
<keyword id="KW-0545">Nucleotide biosynthesis</keyword>
<keyword id="KW-0547">Nucleotide-binding</keyword>
<keyword id="KW-1185">Reference proteome</keyword>
<keyword id="KW-0808">Transferase</keyword>
<evidence type="ECO:0000255" key="1"/>
<evidence type="ECO:0000305" key="2"/>
<comment type="catalytic activity">
    <reaction>
        <text>D-ribose 5-phosphate + ATP = 5-phospho-alpha-D-ribose 1-diphosphate + AMP + H(+)</text>
        <dbReference type="Rhea" id="RHEA:15609"/>
        <dbReference type="ChEBI" id="CHEBI:15378"/>
        <dbReference type="ChEBI" id="CHEBI:30616"/>
        <dbReference type="ChEBI" id="CHEBI:58017"/>
        <dbReference type="ChEBI" id="CHEBI:78346"/>
        <dbReference type="ChEBI" id="CHEBI:456215"/>
        <dbReference type="EC" id="2.7.6.1"/>
    </reaction>
</comment>
<comment type="similarity">
    <text evidence="2">Belongs to the ribose-phosphate pyrophosphokinase family.</text>
</comment>
<proteinExistence type="evidence at transcript level"/>